<accession>O85674</accession>
<reference evidence="4 5" key="1">
    <citation type="journal article" date="1998" name="J. Bacteriol.">
        <title>Similarities between the antABC-encoded anthranilate dioxygenase and the benABC-encoded benzoate dioxygenase of Acinetobacter sp. strain ADP1.</title>
        <authorList>
            <person name="Bundy B.M."/>
            <person name="Campbell A.L."/>
            <person name="Neidle E.L."/>
        </authorList>
    </citation>
    <scope>NUCLEOTIDE SEQUENCE [GENOMIC DNA]</scope>
    <source>
        <strain>ATCC 33305 / BD413 / ADP1</strain>
    </source>
</reference>
<reference evidence="6" key="2">
    <citation type="journal article" date="2004" name="Nucleic Acids Res.">
        <title>Unique features revealed by the genome sequence of Acinetobacter sp. ADP1, a versatile and naturally transformation competent bacterium.</title>
        <authorList>
            <person name="Barbe V."/>
            <person name="Vallenet D."/>
            <person name="Fonknechten N."/>
            <person name="Kreimeyer A."/>
            <person name="Oztas S."/>
            <person name="Labarre L."/>
            <person name="Cruveiller S."/>
            <person name="Robert C."/>
            <person name="Duprat S."/>
            <person name="Wincker P."/>
            <person name="Ornston L.N."/>
            <person name="Weissenbach J."/>
            <person name="Marliere P."/>
            <person name="Cohen G.N."/>
            <person name="Medigue C."/>
        </authorList>
    </citation>
    <scope>NUCLEOTIDE SEQUENCE [LARGE SCALE GENOMIC DNA]</scope>
    <source>
        <strain>ATCC 33305 / BD413 / ADP1</strain>
    </source>
</reference>
<reference evidence="4" key="3">
    <citation type="journal article" date="2001" name="J. Bacteriol.">
        <title>Characterization and evolution of anthranilate 1,2-dioxygenase from Acinetobacter sp. strain ADP1.</title>
        <authorList>
            <person name="Eby D.M."/>
            <person name="Beharry Z.M."/>
            <person name="Coulter E.D."/>
            <person name="Kurtz D.M. Jr."/>
            <person name="Neidle E.L."/>
        </authorList>
    </citation>
    <scope>FUNCTION</scope>
    <scope>CATALYTIC ACTIVITY</scope>
    <scope>BIOPHYSICOCHEMICAL PROPERTIES</scope>
    <scope>PATHWAY</scope>
    <scope>SUBUNIT</scope>
</reference>
<keyword id="KW-0058">Aromatic hydrocarbons catabolism</keyword>
<keyword id="KW-0223">Dioxygenase</keyword>
<keyword id="KW-0520">NAD</keyword>
<keyword id="KW-0560">Oxidoreductase</keyword>
<name>ANTDB_ACIAD</name>
<gene>
    <name evidence="5" type="primary">antB</name>
    <name type="ordered locus">ACIAD2670</name>
</gene>
<dbReference type="EC" id="1.14.12.1" evidence="2"/>
<dbReference type="EMBL" id="AF071556">
    <property type="protein sequence ID" value="AAC34814.1"/>
    <property type="molecule type" value="Genomic_DNA"/>
</dbReference>
<dbReference type="EMBL" id="CR543861">
    <property type="protein sequence ID" value="CAG69425.1"/>
    <property type="molecule type" value="Genomic_DNA"/>
</dbReference>
<dbReference type="RefSeq" id="WP_004928948.1">
    <property type="nucleotide sequence ID" value="NC_005966.1"/>
</dbReference>
<dbReference type="SMR" id="O85674"/>
<dbReference type="STRING" id="202950.GCA_001485005_02316"/>
<dbReference type="GeneID" id="45234945"/>
<dbReference type="KEGG" id="aci:ACIAD2670"/>
<dbReference type="eggNOG" id="COG5517">
    <property type="taxonomic scope" value="Bacteria"/>
</dbReference>
<dbReference type="HOGENOM" id="CLU_102527_0_1_6"/>
<dbReference type="OrthoDB" id="7446267at2"/>
<dbReference type="BioCyc" id="ASP62977:ACIAD_RS12140-MONOMER"/>
<dbReference type="BioCyc" id="MetaCyc:MONOMER-7506"/>
<dbReference type="UniPathway" id="UPA01016">
    <property type="reaction ID" value="UER01026"/>
</dbReference>
<dbReference type="Proteomes" id="UP000000430">
    <property type="component" value="Chromosome"/>
</dbReference>
<dbReference type="GO" id="GO:0018618">
    <property type="term" value="F:anthranilate 1,2-dioxygenase (deaminating, decarboxylating) activity"/>
    <property type="evidence" value="ECO:0007669"/>
    <property type="project" value="UniProtKB-EC"/>
</dbReference>
<dbReference type="GO" id="GO:0019380">
    <property type="term" value="P:3-phenylpropionate catabolic process"/>
    <property type="evidence" value="ECO:0007669"/>
    <property type="project" value="TreeGrafter"/>
</dbReference>
<dbReference type="CDD" id="cd00667">
    <property type="entry name" value="ring_hydroxylating_dioxygenases_beta"/>
    <property type="match status" value="1"/>
</dbReference>
<dbReference type="Gene3D" id="3.10.450.50">
    <property type="match status" value="1"/>
</dbReference>
<dbReference type="InterPro" id="IPR017640">
    <property type="entry name" value="Anthranilate_1-2-diOase_ssu"/>
</dbReference>
<dbReference type="InterPro" id="IPR032710">
    <property type="entry name" value="NTF2-like_dom_sf"/>
</dbReference>
<dbReference type="InterPro" id="IPR000391">
    <property type="entry name" value="Rng_hydr_dOase-bsu"/>
</dbReference>
<dbReference type="NCBIfam" id="TIGR03231">
    <property type="entry name" value="anthran_1_2_B"/>
    <property type="match status" value="1"/>
</dbReference>
<dbReference type="PANTHER" id="PTHR41534">
    <property type="entry name" value="BLR3401 PROTEIN"/>
    <property type="match status" value="1"/>
</dbReference>
<dbReference type="PANTHER" id="PTHR41534:SF1">
    <property type="entry name" value="BLR3401 PROTEIN"/>
    <property type="match status" value="1"/>
</dbReference>
<dbReference type="Pfam" id="PF00866">
    <property type="entry name" value="Ring_hydroxyl_B"/>
    <property type="match status" value="1"/>
</dbReference>
<dbReference type="SUPFAM" id="SSF54427">
    <property type="entry name" value="NTF2-like"/>
    <property type="match status" value="1"/>
</dbReference>
<comment type="function">
    <text evidence="2">Component of anthranilate dioxygenase multicomponent enzyme system which catalyzes the incorporation of both atoms of molecular oxygen into anthranilate to form catechol.</text>
</comment>
<comment type="catalytic activity">
    <reaction evidence="2">
        <text>anthranilate + NADH + O2 + 3 H(+) = catechol + NH4(+) + CO2 + NAD(+)</text>
        <dbReference type="Rhea" id="RHEA:11076"/>
        <dbReference type="ChEBI" id="CHEBI:15378"/>
        <dbReference type="ChEBI" id="CHEBI:15379"/>
        <dbReference type="ChEBI" id="CHEBI:16526"/>
        <dbReference type="ChEBI" id="CHEBI:16567"/>
        <dbReference type="ChEBI" id="CHEBI:18135"/>
        <dbReference type="ChEBI" id="CHEBI:28938"/>
        <dbReference type="ChEBI" id="CHEBI:57540"/>
        <dbReference type="ChEBI" id="CHEBI:57945"/>
        <dbReference type="EC" id="1.14.12.1"/>
    </reaction>
</comment>
<comment type="catalytic activity">
    <reaction evidence="2">
        <text>anthranilate + NADPH + O2 + 3 H(+) = catechol + NH4(+) + CO2 + NADP(+)</text>
        <dbReference type="Rhea" id="RHEA:11072"/>
        <dbReference type="ChEBI" id="CHEBI:15378"/>
        <dbReference type="ChEBI" id="CHEBI:15379"/>
        <dbReference type="ChEBI" id="CHEBI:16526"/>
        <dbReference type="ChEBI" id="CHEBI:16567"/>
        <dbReference type="ChEBI" id="CHEBI:18135"/>
        <dbReference type="ChEBI" id="CHEBI:28938"/>
        <dbReference type="ChEBI" id="CHEBI:57783"/>
        <dbReference type="ChEBI" id="CHEBI:58349"/>
        <dbReference type="EC" id="1.14.12.1"/>
    </reaction>
</comment>
<comment type="biophysicochemical properties">
    <kinetics>
        <KM evidence="2">1 uM for anthranilate</KM>
        <KM evidence="2">12 uM for benzoate</KM>
        <text>KM values measured using the AntAB complex.</text>
    </kinetics>
    <phDependence>
        <text evidence="2">Optimum pH is 6.3 for the reverse reaction.</text>
    </phDependence>
</comment>
<comment type="pathway">
    <text evidence="2">Aromatic compound metabolism; anthranilate degradation via hydroxylation; catechol from anthranilate: step 1/1.</text>
</comment>
<comment type="subunit">
    <text evidence="2">The anthranilate dioxygenase (AntDO) multicomponent enzyme system is composed of an oxygenase component and a NADH:acceptor reductase component (AntC). The oxygenase component is a heterohexamer of 3 large (AntA) and 3 small (AntB) subunits.</text>
</comment>
<comment type="similarity">
    <text evidence="1">Belongs to the bacterial ring-hydroxylating dioxygenase beta subunit family.</text>
</comment>
<proteinExistence type="evidence at protein level"/>
<protein>
    <recommendedName>
        <fullName evidence="3">Anthranilate 1,2-dioxygenase small subunit</fullName>
        <ecNumber evidence="2">1.14.12.1</ecNumber>
    </recommendedName>
</protein>
<feature type="chain" id="PRO_0000415158" description="Anthranilate 1,2-dioxygenase small subunit">
    <location>
        <begin position="1"/>
        <end position="163"/>
    </location>
</feature>
<organism>
    <name type="scientific">Acinetobacter baylyi (strain ATCC 33305 / BD413 / ADP1)</name>
    <dbReference type="NCBI Taxonomy" id="62977"/>
    <lineage>
        <taxon>Bacteria</taxon>
        <taxon>Pseudomonadati</taxon>
        <taxon>Pseudomonadota</taxon>
        <taxon>Gammaproteobacteria</taxon>
        <taxon>Moraxellales</taxon>
        <taxon>Moraxellaceae</taxon>
        <taxon>Acinetobacter</taxon>
    </lineage>
</organism>
<evidence type="ECO:0000255" key="1"/>
<evidence type="ECO:0000269" key="2">
    <source>
    </source>
</evidence>
<evidence type="ECO:0000303" key="3">
    <source>
    </source>
</evidence>
<evidence type="ECO:0000305" key="4"/>
<evidence type="ECO:0000312" key="5">
    <source>
        <dbReference type="EMBL" id="AAC34814.1"/>
    </source>
</evidence>
<evidence type="ECO:0000312" key="6">
    <source>
        <dbReference type="EMBL" id="CAG69425.1"/>
    </source>
</evidence>
<sequence length="163" mass="19331">MSLELHFAVSQFLYKKAELCDNYDWDAYIDLYDEDSEYHIPQWIDDHNYVQDPNQGLSYIYYEDRSGLEDRVFRIRTGKAASATPLPRTQHNIHNVQVKTLEDGLIEAKVSWRTLYNRQGLEGCFYGRATYVLRPTEDSFRIRRQHSVLLNDKIDSVLDFYHV</sequence>